<comment type="function">
    <text evidence="1">Required for the formation of a threonylcarbamoyl group on adenosine at position 37 (t(6)A37) in tRNAs that read codons beginning with adenine. Is involved in the transfer of the threonylcarbamoyl moiety of threonylcarbamoyl-AMP (TC-AMP) to the N6 group of A37, together with TsaD and TsaB. TsaE seems to play an indirect role in the t(6)A biosynthesis pathway, possibly in regulating the core enzymatic function of TsaD (By similarity).</text>
</comment>
<comment type="subcellular location">
    <subcellularLocation>
        <location evidence="1">Cytoplasm</location>
    </subcellularLocation>
</comment>
<comment type="similarity">
    <text evidence="2">Belongs to the TsaE family.</text>
</comment>
<dbReference type="EMBL" id="BA000022">
    <property type="protein sequence ID" value="BAA18515.1"/>
    <property type="molecule type" value="Genomic_DNA"/>
</dbReference>
<dbReference type="PIR" id="S76256">
    <property type="entry name" value="S76256"/>
</dbReference>
<dbReference type="SMR" id="P74415"/>
<dbReference type="FunCoup" id="P74415">
    <property type="interactions" value="409"/>
</dbReference>
<dbReference type="STRING" id="1148.gene:10499396"/>
<dbReference type="PaxDb" id="1148-1653602"/>
<dbReference type="EnsemblBacteria" id="BAA18515">
    <property type="protein sequence ID" value="BAA18515"/>
    <property type="gene ID" value="BAA18515"/>
</dbReference>
<dbReference type="KEGG" id="syn:sll0257"/>
<dbReference type="eggNOG" id="COG0802">
    <property type="taxonomic scope" value="Bacteria"/>
</dbReference>
<dbReference type="InParanoid" id="P74415"/>
<dbReference type="PhylomeDB" id="P74415"/>
<dbReference type="Proteomes" id="UP000001425">
    <property type="component" value="Chromosome"/>
</dbReference>
<dbReference type="GO" id="GO:0005737">
    <property type="term" value="C:cytoplasm"/>
    <property type="evidence" value="ECO:0007669"/>
    <property type="project" value="UniProtKB-SubCell"/>
</dbReference>
<dbReference type="GO" id="GO:0005524">
    <property type="term" value="F:ATP binding"/>
    <property type="evidence" value="ECO:0007669"/>
    <property type="project" value="UniProtKB-KW"/>
</dbReference>
<dbReference type="GO" id="GO:0046872">
    <property type="term" value="F:metal ion binding"/>
    <property type="evidence" value="ECO:0007669"/>
    <property type="project" value="UniProtKB-KW"/>
</dbReference>
<dbReference type="GO" id="GO:0002949">
    <property type="term" value="P:tRNA threonylcarbamoyladenosine modification"/>
    <property type="evidence" value="ECO:0000318"/>
    <property type="project" value="GO_Central"/>
</dbReference>
<dbReference type="Gene3D" id="3.40.50.300">
    <property type="entry name" value="P-loop containing nucleotide triphosphate hydrolases"/>
    <property type="match status" value="1"/>
</dbReference>
<dbReference type="InterPro" id="IPR027417">
    <property type="entry name" value="P-loop_NTPase"/>
</dbReference>
<dbReference type="InterPro" id="IPR003442">
    <property type="entry name" value="T6A_TsaE"/>
</dbReference>
<dbReference type="NCBIfam" id="TIGR00150">
    <property type="entry name" value="T6A_YjeE"/>
    <property type="match status" value="1"/>
</dbReference>
<dbReference type="PANTHER" id="PTHR33540">
    <property type="entry name" value="TRNA THREONYLCARBAMOYLADENOSINE BIOSYNTHESIS PROTEIN TSAE"/>
    <property type="match status" value="1"/>
</dbReference>
<dbReference type="PANTHER" id="PTHR33540:SF2">
    <property type="entry name" value="TRNA THREONYLCARBAMOYLADENOSINE BIOSYNTHESIS PROTEIN TSAE"/>
    <property type="match status" value="1"/>
</dbReference>
<dbReference type="Pfam" id="PF02367">
    <property type="entry name" value="TsaE"/>
    <property type="match status" value="1"/>
</dbReference>
<dbReference type="SUPFAM" id="SSF52540">
    <property type="entry name" value="P-loop containing nucleoside triphosphate hydrolases"/>
    <property type="match status" value="1"/>
</dbReference>
<keyword id="KW-0067">ATP-binding</keyword>
<keyword id="KW-0963">Cytoplasm</keyword>
<keyword id="KW-0460">Magnesium</keyword>
<keyword id="KW-0479">Metal-binding</keyword>
<keyword id="KW-0547">Nucleotide-binding</keyword>
<keyword id="KW-1185">Reference proteome</keyword>
<keyword id="KW-0819">tRNA processing</keyword>
<proteinExistence type="inferred from homology"/>
<reference key="1">
    <citation type="journal article" date="1996" name="DNA Res.">
        <title>Sequence analysis of the genome of the unicellular cyanobacterium Synechocystis sp. strain PCC6803. II. Sequence determination of the entire genome and assignment of potential protein-coding regions.</title>
        <authorList>
            <person name="Kaneko T."/>
            <person name="Sato S."/>
            <person name="Kotani H."/>
            <person name="Tanaka A."/>
            <person name="Asamizu E."/>
            <person name="Nakamura Y."/>
            <person name="Miyajima N."/>
            <person name="Hirosawa M."/>
            <person name="Sugiura M."/>
            <person name="Sasamoto S."/>
            <person name="Kimura T."/>
            <person name="Hosouchi T."/>
            <person name="Matsuno A."/>
            <person name="Muraki A."/>
            <person name="Nakazaki N."/>
            <person name="Naruo K."/>
            <person name="Okumura S."/>
            <person name="Shimpo S."/>
            <person name="Takeuchi C."/>
            <person name="Wada T."/>
            <person name="Watanabe A."/>
            <person name="Yamada M."/>
            <person name="Yasuda M."/>
            <person name="Tabata S."/>
        </authorList>
    </citation>
    <scope>NUCLEOTIDE SEQUENCE [LARGE SCALE GENOMIC DNA]</scope>
    <source>
        <strain>ATCC 27184 / PCC 6803 / Kazusa</strain>
    </source>
</reference>
<name>TSAE_SYNY3</name>
<evidence type="ECO:0000250" key="1"/>
<evidence type="ECO:0000305" key="2"/>
<gene>
    <name type="primary">tsaE</name>
    <name type="ordered locus">sll0257</name>
</gene>
<accession>P74415</accession>
<sequence>MNENSMEFFLPDLNATDQWGQQLAQQLPLGTIILLQGDLGAGKTSLVQGLGRGLGITGEIVSPTFTIVNEYREGKMPLYHLDLYRLNTLEVEYLYPEQYWQGEDFPLGITAVEWPERLPQLPSQYLQIQLCHQGEGRSIALTAQDWAMDLKELLPPS</sequence>
<feature type="chain" id="PRO_0000096219" description="tRNA threonylcarbamoyladenosine biosynthesis protein TsaE">
    <location>
        <begin position="1"/>
        <end position="157"/>
    </location>
</feature>
<feature type="binding site" evidence="1">
    <location>
        <begin position="40"/>
        <end position="45"/>
    </location>
    <ligand>
        <name>ATP</name>
        <dbReference type="ChEBI" id="CHEBI:30616"/>
    </ligand>
</feature>
<feature type="binding site" evidence="1">
    <location>
        <position position="44"/>
    </location>
    <ligand>
        <name>Mg(2+)</name>
        <dbReference type="ChEBI" id="CHEBI:18420"/>
    </ligand>
</feature>
<feature type="binding site" evidence="1">
    <location>
        <position position="113"/>
    </location>
    <ligand>
        <name>Mg(2+)</name>
        <dbReference type="ChEBI" id="CHEBI:18420"/>
    </ligand>
</feature>
<feature type="binding site" evidence="1">
    <location>
        <position position="135"/>
    </location>
    <ligand>
        <name>ATP</name>
        <dbReference type="ChEBI" id="CHEBI:30616"/>
    </ligand>
</feature>
<organism>
    <name type="scientific">Synechocystis sp. (strain ATCC 27184 / PCC 6803 / Kazusa)</name>
    <dbReference type="NCBI Taxonomy" id="1111708"/>
    <lineage>
        <taxon>Bacteria</taxon>
        <taxon>Bacillati</taxon>
        <taxon>Cyanobacteriota</taxon>
        <taxon>Cyanophyceae</taxon>
        <taxon>Synechococcales</taxon>
        <taxon>Merismopediaceae</taxon>
        <taxon>Synechocystis</taxon>
    </lineage>
</organism>
<protein>
    <recommendedName>
        <fullName>tRNA threonylcarbamoyladenosine biosynthesis protein TsaE</fullName>
    </recommendedName>
    <alternativeName>
        <fullName>t(6)A37 threonylcarbamoyladenosine biosynthesis protein TsaE</fullName>
    </alternativeName>
</protein>